<dbReference type="EC" id="4.1.99.17" evidence="1"/>
<dbReference type="EMBL" id="CP000440">
    <property type="protein sequence ID" value="ABI86664.1"/>
    <property type="molecule type" value="Genomic_DNA"/>
</dbReference>
<dbReference type="RefSeq" id="WP_006754218.1">
    <property type="nucleotide sequence ID" value="NZ_CP009798.1"/>
</dbReference>
<dbReference type="SMR" id="Q0BGQ9"/>
<dbReference type="GeneID" id="93083488"/>
<dbReference type="KEGG" id="bam:Bamb_1105"/>
<dbReference type="PATRIC" id="fig|339670.21.peg.462"/>
<dbReference type="eggNOG" id="COG0422">
    <property type="taxonomic scope" value="Bacteria"/>
</dbReference>
<dbReference type="UniPathway" id="UPA00060"/>
<dbReference type="Proteomes" id="UP000000662">
    <property type="component" value="Chromosome 1"/>
</dbReference>
<dbReference type="GO" id="GO:0005829">
    <property type="term" value="C:cytosol"/>
    <property type="evidence" value="ECO:0007669"/>
    <property type="project" value="TreeGrafter"/>
</dbReference>
<dbReference type="GO" id="GO:0051539">
    <property type="term" value="F:4 iron, 4 sulfur cluster binding"/>
    <property type="evidence" value="ECO:0007669"/>
    <property type="project" value="UniProtKB-KW"/>
</dbReference>
<dbReference type="GO" id="GO:0016830">
    <property type="term" value="F:carbon-carbon lyase activity"/>
    <property type="evidence" value="ECO:0007669"/>
    <property type="project" value="InterPro"/>
</dbReference>
<dbReference type="GO" id="GO:0008270">
    <property type="term" value="F:zinc ion binding"/>
    <property type="evidence" value="ECO:0007669"/>
    <property type="project" value="UniProtKB-UniRule"/>
</dbReference>
<dbReference type="GO" id="GO:0009228">
    <property type="term" value="P:thiamine biosynthetic process"/>
    <property type="evidence" value="ECO:0007669"/>
    <property type="project" value="UniProtKB-KW"/>
</dbReference>
<dbReference type="GO" id="GO:0009229">
    <property type="term" value="P:thiamine diphosphate biosynthetic process"/>
    <property type="evidence" value="ECO:0007669"/>
    <property type="project" value="UniProtKB-UniRule"/>
</dbReference>
<dbReference type="FunFam" id="3.20.20.540:FF:000001">
    <property type="entry name" value="Phosphomethylpyrimidine synthase"/>
    <property type="match status" value="1"/>
</dbReference>
<dbReference type="Gene3D" id="6.10.250.620">
    <property type="match status" value="1"/>
</dbReference>
<dbReference type="Gene3D" id="3.20.20.540">
    <property type="entry name" value="Radical SAM ThiC family, central domain"/>
    <property type="match status" value="1"/>
</dbReference>
<dbReference type="HAMAP" id="MF_00089">
    <property type="entry name" value="ThiC"/>
    <property type="match status" value="1"/>
</dbReference>
<dbReference type="InterPro" id="IPR037509">
    <property type="entry name" value="ThiC"/>
</dbReference>
<dbReference type="InterPro" id="IPR025747">
    <property type="entry name" value="ThiC-associated_dom"/>
</dbReference>
<dbReference type="InterPro" id="IPR038521">
    <property type="entry name" value="ThiC/Bza_core_dom"/>
</dbReference>
<dbReference type="InterPro" id="IPR002817">
    <property type="entry name" value="ThiC/BzaA/B"/>
</dbReference>
<dbReference type="NCBIfam" id="NF006763">
    <property type="entry name" value="PRK09284.1"/>
    <property type="match status" value="1"/>
</dbReference>
<dbReference type="NCBIfam" id="NF009895">
    <property type="entry name" value="PRK13352.1"/>
    <property type="match status" value="1"/>
</dbReference>
<dbReference type="NCBIfam" id="TIGR00190">
    <property type="entry name" value="thiC"/>
    <property type="match status" value="1"/>
</dbReference>
<dbReference type="PANTHER" id="PTHR30557:SF1">
    <property type="entry name" value="PHOSPHOMETHYLPYRIMIDINE SYNTHASE, CHLOROPLASTIC"/>
    <property type="match status" value="1"/>
</dbReference>
<dbReference type="PANTHER" id="PTHR30557">
    <property type="entry name" value="THIAMINE BIOSYNTHESIS PROTEIN THIC"/>
    <property type="match status" value="1"/>
</dbReference>
<dbReference type="Pfam" id="PF13667">
    <property type="entry name" value="ThiC-associated"/>
    <property type="match status" value="1"/>
</dbReference>
<dbReference type="Pfam" id="PF01964">
    <property type="entry name" value="ThiC_Rad_SAM"/>
    <property type="match status" value="1"/>
</dbReference>
<dbReference type="SFLD" id="SFLDF00407">
    <property type="entry name" value="phosphomethylpyrimidine_syntha"/>
    <property type="match status" value="1"/>
</dbReference>
<dbReference type="SFLD" id="SFLDG01114">
    <property type="entry name" value="phosphomethylpyrimidine_syntha"/>
    <property type="match status" value="1"/>
</dbReference>
<dbReference type="SFLD" id="SFLDS00113">
    <property type="entry name" value="Radical_SAM_Phosphomethylpyrim"/>
    <property type="match status" value="1"/>
</dbReference>
<comment type="function">
    <text evidence="1">Catalyzes the synthesis of the hydroxymethylpyrimidine phosphate (HMP-P) moiety of thiamine from aminoimidazole ribotide (AIR) in a radical S-adenosyl-L-methionine (SAM)-dependent reaction.</text>
</comment>
<comment type="catalytic activity">
    <reaction evidence="1">
        <text>5-amino-1-(5-phospho-beta-D-ribosyl)imidazole + S-adenosyl-L-methionine = 4-amino-2-methyl-5-(phosphooxymethyl)pyrimidine + CO + 5'-deoxyadenosine + formate + L-methionine + 3 H(+)</text>
        <dbReference type="Rhea" id="RHEA:24840"/>
        <dbReference type="ChEBI" id="CHEBI:15378"/>
        <dbReference type="ChEBI" id="CHEBI:15740"/>
        <dbReference type="ChEBI" id="CHEBI:17245"/>
        <dbReference type="ChEBI" id="CHEBI:17319"/>
        <dbReference type="ChEBI" id="CHEBI:57844"/>
        <dbReference type="ChEBI" id="CHEBI:58354"/>
        <dbReference type="ChEBI" id="CHEBI:59789"/>
        <dbReference type="ChEBI" id="CHEBI:137981"/>
        <dbReference type="EC" id="4.1.99.17"/>
    </reaction>
</comment>
<comment type="cofactor">
    <cofactor evidence="1">
        <name>[4Fe-4S] cluster</name>
        <dbReference type="ChEBI" id="CHEBI:49883"/>
    </cofactor>
    <text evidence="1">Binds 1 [4Fe-4S] cluster per subunit. The cluster is coordinated with 3 cysteines and an exchangeable S-adenosyl-L-methionine.</text>
</comment>
<comment type="pathway">
    <text evidence="1">Cofactor biosynthesis; thiamine diphosphate biosynthesis.</text>
</comment>
<comment type="subunit">
    <text evidence="1">Homodimer.</text>
</comment>
<comment type="similarity">
    <text evidence="1">Belongs to the ThiC family.</text>
</comment>
<gene>
    <name evidence="1" type="primary">thiC</name>
    <name type="ordered locus">Bamb_1105</name>
</gene>
<name>THIC_BURCM</name>
<proteinExistence type="inferred from homology"/>
<accession>Q0BGQ9</accession>
<evidence type="ECO:0000255" key="1">
    <source>
        <dbReference type="HAMAP-Rule" id="MF_00089"/>
    </source>
</evidence>
<sequence length="643" mass="71035">MNANPKFLSADAHVDAAAVAPLPNSRKVYVTGSQPDIRVPMREITQADTPTGFGGEKNPPIYVYDTSGPYTDPDAKIDIRAGLPALRQGWIEARGDTEVLDGLSSQYGLERAADPATADLRFPGLHRNPRRAQPGKNVTQMHYARQGIITPEMEYIAIRENQRRAEYIESLKSSGPNGAKLAAMMGRQHPGQAFGAAAFGANALAEITPEFVRDEIARGRAIIPANINHPESEPMIIGRNFLVKINANIGNSAVTSSIGEEVDKMTWAIRWGGDTVMDLSTGKHIHETREWIIRNSPVPIGTVPIYQALEKVNGKAEDLTWEIFRDTLIEQAEQGVDYFTIHAGVRLQYVPLTANRMTGIVSRGGSIMAKWCLAHHKESFLYEHFEEICEIMKAYDVSFSLGDGLRPGSIYDANDEAQLGELKTLGELTQIAWKHDVQVMIEGPGHVPMQLIKENMDLQLDWCKEAPFYTLGPLTTDIAPGYDHITSGIGAAMIGWFGTAMLCYVTPKEHLGLPNKDDVKEGIITYKLAAHAADLAKGHPGAQVRDNALSKARFEFRWEDQFNIGLDPDKAREFHDETLPKDSAKVAHFCSMCGPHFCSMKITQDVREFAAQQGVSETEALKKGMEVKAVEFVKTGAEIYHRQ</sequence>
<reference key="1">
    <citation type="submission" date="2006-08" db="EMBL/GenBank/DDBJ databases">
        <title>Complete sequence of chromosome 1 of Burkholderia cepacia AMMD.</title>
        <authorList>
            <person name="Copeland A."/>
            <person name="Lucas S."/>
            <person name="Lapidus A."/>
            <person name="Barry K."/>
            <person name="Detter J.C."/>
            <person name="Glavina del Rio T."/>
            <person name="Hammon N."/>
            <person name="Israni S."/>
            <person name="Pitluck S."/>
            <person name="Bruce D."/>
            <person name="Chain P."/>
            <person name="Malfatti S."/>
            <person name="Shin M."/>
            <person name="Vergez L."/>
            <person name="Schmutz J."/>
            <person name="Larimer F."/>
            <person name="Land M."/>
            <person name="Hauser L."/>
            <person name="Kyrpides N."/>
            <person name="Kim E."/>
            <person name="Parke J."/>
            <person name="Coenye T."/>
            <person name="Konstantinidis K."/>
            <person name="Ramette A."/>
            <person name="Tiedje J."/>
            <person name="Richardson P."/>
        </authorList>
    </citation>
    <scope>NUCLEOTIDE SEQUENCE [LARGE SCALE GENOMIC DNA]</scope>
    <source>
        <strain>ATCC BAA-244 / DSM 16087 / CCUG 44356 / LMG 19182 / AMMD</strain>
    </source>
</reference>
<feature type="chain" id="PRO_1000004740" description="Phosphomethylpyrimidine synthase">
    <location>
        <begin position="1"/>
        <end position="643"/>
    </location>
</feature>
<feature type="binding site" evidence="1">
    <location>
        <position position="248"/>
    </location>
    <ligand>
        <name>substrate</name>
    </ligand>
</feature>
<feature type="binding site" evidence="1">
    <location>
        <position position="277"/>
    </location>
    <ligand>
        <name>substrate</name>
    </ligand>
</feature>
<feature type="binding site" evidence="1">
    <location>
        <position position="306"/>
    </location>
    <ligand>
        <name>substrate</name>
    </ligand>
</feature>
<feature type="binding site" evidence="1">
    <location>
        <position position="342"/>
    </location>
    <ligand>
        <name>substrate</name>
    </ligand>
</feature>
<feature type="binding site" evidence="1">
    <location>
        <begin position="362"/>
        <end position="364"/>
    </location>
    <ligand>
        <name>substrate</name>
    </ligand>
</feature>
<feature type="binding site" evidence="1">
    <location>
        <begin position="403"/>
        <end position="406"/>
    </location>
    <ligand>
        <name>substrate</name>
    </ligand>
</feature>
<feature type="binding site" evidence="1">
    <location>
        <position position="442"/>
    </location>
    <ligand>
        <name>substrate</name>
    </ligand>
</feature>
<feature type="binding site" evidence="1">
    <location>
        <position position="446"/>
    </location>
    <ligand>
        <name>Zn(2+)</name>
        <dbReference type="ChEBI" id="CHEBI:29105"/>
    </ligand>
</feature>
<feature type="binding site" evidence="1">
    <location>
        <position position="469"/>
    </location>
    <ligand>
        <name>substrate</name>
    </ligand>
</feature>
<feature type="binding site" evidence="1">
    <location>
        <position position="510"/>
    </location>
    <ligand>
        <name>Zn(2+)</name>
        <dbReference type="ChEBI" id="CHEBI:29105"/>
    </ligand>
</feature>
<feature type="binding site" evidence="1">
    <location>
        <position position="590"/>
    </location>
    <ligand>
        <name>[4Fe-4S] cluster</name>
        <dbReference type="ChEBI" id="CHEBI:49883"/>
        <note>4Fe-4S-S-AdoMet</note>
    </ligand>
</feature>
<feature type="binding site" evidence="1">
    <location>
        <position position="593"/>
    </location>
    <ligand>
        <name>[4Fe-4S] cluster</name>
        <dbReference type="ChEBI" id="CHEBI:49883"/>
        <note>4Fe-4S-S-AdoMet</note>
    </ligand>
</feature>
<feature type="binding site" evidence="1">
    <location>
        <position position="598"/>
    </location>
    <ligand>
        <name>[4Fe-4S] cluster</name>
        <dbReference type="ChEBI" id="CHEBI:49883"/>
        <note>4Fe-4S-S-AdoMet</note>
    </ligand>
</feature>
<protein>
    <recommendedName>
        <fullName evidence="1">Phosphomethylpyrimidine synthase</fullName>
        <ecNumber evidence="1">4.1.99.17</ecNumber>
    </recommendedName>
    <alternativeName>
        <fullName evidence="1">Hydroxymethylpyrimidine phosphate synthase</fullName>
        <shortName evidence="1">HMP-P synthase</shortName>
        <shortName evidence="1">HMP-phosphate synthase</shortName>
        <shortName evidence="1">HMPP synthase</shortName>
    </alternativeName>
    <alternativeName>
        <fullName evidence="1">Thiamine biosynthesis protein ThiC</fullName>
    </alternativeName>
</protein>
<organism>
    <name type="scientific">Burkholderia ambifaria (strain ATCC BAA-244 / DSM 16087 / CCUG 44356 / LMG 19182 / AMMD)</name>
    <name type="common">Burkholderia cepacia (strain AMMD)</name>
    <dbReference type="NCBI Taxonomy" id="339670"/>
    <lineage>
        <taxon>Bacteria</taxon>
        <taxon>Pseudomonadati</taxon>
        <taxon>Pseudomonadota</taxon>
        <taxon>Betaproteobacteria</taxon>
        <taxon>Burkholderiales</taxon>
        <taxon>Burkholderiaceae</taxon>
        <taxon>Burkholderia</taxon>
        <taxon>Burkholderia cepacia complex</taxon>
    </lineage>
</organism>
<keyword id="KW-0004">4Fe-4S</keyword>
<keyword id="KW-0408">Iron</keyword>
<keyword id="KW-0411">Iron-sulfur</keyword>
<keyword id="KW-0456">Lyase</keyword>
<keyword id="KW-0479">Metal-binding</keyword>
<keyword id="KW-0949">S-adenosyl-L-methionine</keyword>
<keyword id="KW-0784">Thiamine biosynthesis</keyword>
<keyword id="KW-0862">Zinc</keyword>